<name>MAZG_ECOLI</name>
<sequence length="263" mass="30412">MNQIDRLLTIMQRLRDPENGCPWDKEQTFATIAPYTLEETYEVLDAIAREDFDDLRGELGDLLFQVVFYAQMAQEEGRFDFNDICAAISDKLERRHPHVFADSSAENSSEVLARWEQIKTEERAQKAQHSALDDIPRSLPALMRAQKIQKRCANVGFDWTTLGPVVDKVYEEIDEVMYEARQAVVDQAKLEEEMGDLLFATVNLARHLGTKAEIALQKANEKFERRFREVERIVAARGLEMTGVDLETMEEVWQQVKRQEIDL</sequence>
<comment type="function">
    <text evidence="2 3 4">Involved in the regulation of bacterial cell survival under conditions of nutritional stress. Regulates the type II MazE-MazF toxin-antitoxin (TA) system which mediates programmed cell death (PCD). This is achieved by lowering the cellular concentration of (p)ppGpp produced by RelA under amino acid starvation, thus protecting the cell from the toxicity of MazF. Reduction of (p)ppGpp can be achieved by direct degradation of (p)ppGpp or by degradation of NTPs, which are substrates for (p)ppGpp synthesis by RelA.</text>
</comment>
<comment type="catalytic activity">
    <reaction evidence="1 3">
        <text>ATP + H2O = AMP + diphosphate + H(+)</text>
        <dbReference type="Rhea" id="RHEA:14245"/>
        <dbReference type="ChEBI" id="CHEBI:15377"/>
        <dbReference type="ChEBI" id="CHEBI:15378"/>
        <dbReference type="ChEBI" id="CHEBI:30616"/>
        <dbReference type="ChEBI" id="CHEBI:33019"/>
        <dbReference type="ChEBI" id="CHEBI:456215"/>
        <dbReference type="EC" id="3.6.1.8"/>
    </reaction>
</comment>
<comment type="cofactor">
    <cofactor>
        <name>Mg(2+)</name>
        <dbReference type="ChEBI" id="CHEBI:18420"/>
    </cofactor>
</comment>
<comment type="activity regulation">
    <text evidence="2">Inhibited by the MazE-MazF complex.</text>
</comment>
<comment type="biophysicochemical properties">
    <kinetics>
        <KM evidence="4">0.34 mM for dATP (at pH 9.6 and at 37 degrees Celsius in the presence of 5 mM magnesium)</KM>
        <KM evidence="4">0.71 mM for UTP (at pH 9.6 and at 37 degrees Celsius in the presence of 5 mM magnesium)</KM>
        <KM evidence="4">0.36 mM for 8-oxo-dGTP (at pH 9.6 and at 37 degrees Celsius in the presence of 5 mM magnesium)</KM>
        <Vmax evidence="4">0.23 nmol/min/ug enzyme for 8-oxo-dGTP (at pH 9.6 and at 37 degrees Celsius in the presence of 5 mM magnesium)</Vmax>
        <Vmax evidence="4">1.9 nmol/min/ug enzyme for dATP (at pH 9.6 and at 37 degrees Celsius in the presence of 5 mM magnesium)</Vmax>
        <Vmax evidence="4">1.9 nmol/min/ug enzyme for dUTP (at pH 9.6 and at 37 degrees Celsius in the presence of 5 mM magnesium)</Vmax>
    </kinetics>
</comment>
<comment type="subunit">
    <text evidence="1 3">Homodimer. Interacts with Era.</text>
</comment>
<comment type="interaction">
    <interactant intactId="EBI-554166">
        <id>P0AEY3</id>
    </interactant>
    <interactant intactId="EBI-552130">
        <id>P0AEH5</id>
        <label>elaB</label>
    </interactant>
    <organismsDiffer>false</organismsDiffer>
    <experiments>2</experiments>
</comment>
<comment type="interaction">
    <interactant intactId="EBI-554166">
        <id>P0AEY3</id>
    </interactant>
    <interactant intactId="EBI-543750">
        <id>P0A6F5</id>
        <label>groEL</label>
    </interactant>
    <organismsDiffer>false</organismsDiffer>
    <experiments>2</experiments>
</comment>
<comment type="induction">
    <text>Part of the relA-mazE-mazF-mazG operon, there is also a second mazE-mazF specific promoter which is negatively autoregulated.</text>
</comment>
<comment type="similarity">
    <text evidence="5">Belongs to the nucleoside triphosphate pyrophosphohydrolase family.</text>
</comment>
<dbReference type="EC" id="3.6.1.8"/>
<dbReference type="EMBL" id="J04039">
    <property type="protein sequence ID" value="AAA03240.1"/>
    <property type="molecule type" value="Unassigned_DNA"/>
</dbReference>
<dbReference type="EMBL" id="U29580">
    <property type="protein sequence ID" value="AAA69291.1"/>
    <property type="molecule type" value="Genomic_DNA"/>
</dbReference>
<dbReference type="EMBL" id="U00096">
    <property type="protein sequence ID" value="AAC75823.1"/>
    <property type="molecule type" value="Genomic_DNA"/>
</dbReference>
<dbReference type="EMBL" id="AP009048">
    <property type="protein sequence ID" value="BAE76855.1"/>
    <property type="molecule type" value="Genomic_DNA"/>
</dbReference>
<dbReference type="PIR" id="A65060">
    <property type="entry name" value="A65060"/>
</dbReference>
<dbReference type="RefSeq" id="NP_417261.1">
    <property type="nucleotide sequence ID" value="NC_000913.3"/>
</dbReference>
<dbReference type="RefSeq" id="WP_001071648.1">
    <property type="nucleotide sequence ID" value="NZ_STEB01000030.1"/>
</dbReference>
<dbReference type="PDB" id="3CRA">
    <property type="method" value="X-ray"/>
    <property type="resolution" value="2.10 A"/>
    <property type="chains" value="A/B=1-263"/>
</dbReference>
<dbReference type="PDB" id="3CRC">
    <property type="method" value="X-ray"/>
    <property type="resolution" value="3.00 A"/>
    <property type="chains" value="A/B=1-263"/>
</dbReference>
<dbReference type="PDBsum" id="3CRA"/>
<dbReference type="PDBsum" id="3CRC"/>
<dbReference type="SMR" id="P0AEY3"/>
<dbReference type="BioGRID" id="4262299">
    <property type="interactions" value="25"/>
</dbReference>
<dbReference type="BioGRID" id="851584">
    <property type="interactions" value="1"/>
</dbReference>
<dbReference type="DIP" id="DIP-48054N"/>
<dbReference type="FunCoup" id="P0AEY3">
    <property type="interactions" value="383"/>
</dbReference>
<dbReference type="IntAct" id="P0AEY3">
    <property type="interactions" value="7"/>
</dbReference>
<dbReference type="STRING" id="511145.b2781"/>
<dbReference type="jPOST" id="P0AEY3"/>
<dbReference type="PaxDb" id="511145-b2781"/>
<dbReference type="EnsemblBacteria" id="AAC75823">
    <property type="protein sequence ID" value="AAC75823"/>
    <property type="gene ID" value="b2781"/>
</dbReference>
<dbReference type="GeneID" id="93779217"/>
<dbReference type="GeneID" id="947254"/>
<dbReference type="KEGG" id="ecj:JW2752"/>
<dbReference type="KEGG" id="eco:b2781"/>
<dbReference type="KEGG" id="ecoc:C3026_15280"/>
<dbReference type="PATRIC" id="fig|1411691.4.peg.3954"/>
<dbReference type="EchoBASE" id="EB0567"/>
<dbReference type="eggNOG" id="COG3956">
    <property type="taxonomic scope" value="Bacteria"/>
</dbReference>
<dbReference type="HOGENOM" id="CLU_038356_0_1_6"/>
<dbReference type="InParanoid" id="P0AEY3"/>
<dbReference type="OMA" id="HPHIYGD"/>
<dbReference type="OrthoDB" id="9808939at2"/>
<dbReference type="PhylomeDB" id="P0AEY3"/>
<dbReference type="BioCyc" id="EcoCyc:EG10572-MONOMER"/>
<dbReference type="BioCyc" id="MetaCyc:EG10572-MONOMER"/>
<dbReference type="SABIO-RK" id="P0AEY3"/>
<dbReference type="EvolutionaryTrace" id="P0AEY3"/>
<dbReference type="PRO" id="PR:P0AEY3"/>
<dbReference type="Proteomes" id="UP000000625">
    <property type="component" value="Chromosome"/>
</dbReference>
<dbReference type="GO" id="GO:0005524">
    <property type="term" value="F:ATP binding"/>
    <property type="evidence" value="ECO:0007669"/>
    <property type="project" value="UniProtKB-KW"/>
</dbReference>
<dbReference type="GO" id="GO:0047693">
    <property type="term" value="F:ATP diphosphatase activity"/>
    <property type="evidence" value="ECO:0007669"/>
    <property type="project" value="UniProtKB-EC"/>
</dbReference>
<dbReference type="GO" id="GO:0046872">
    <property type="term" value="F:metal ion binding"/>
    <property type="evidence" value="ECO:0007669"/>
    <property type="project" value="UniProtKB-KW"/>
</dbReference>
<dbReference type="GO" id="GO:0047429">
    <property type="term" value="F:nucleoside triphosphate diphosphatase activity"/>
    <property type="evidence" value="ECO:0000314"/>
    <property type="project" value="EcoCyc"/>
</dbReference>
<dbReference type="GO" id="GO:0009267">
    <property type="term" value="P:cellular response to starvation"/>
    <property type="evidence" value="ECO:0000315"/>
    <property type="project" value="EcoCyc"/>
</dbReference>
<dbReference type="GO" id="GO:0046061">
    <property type="term" value="P:dATP catabolic process"/>
    <property type="evidence" value="ECO:0000318"/>
    <property type="project" value="GO_Central"/>
</dbReference>
<dbReference type="GO" id="GO:0006203">
    <property type="term" value="P:dGTP catabolic process"/>
    <property type="evidence" value="ECO:0000318"/>
    <property type="project" value="GO_Central"/>
</dbReference>
<dbReference type="GO" id="GO:0046076">
    <property type="term" value="P:dTTP catabolic process"/>
    <property type="evidence" value="ECO:0000318"/>
    <property type="project" value="GO_Central"/>
</dbReference>
<dbReference type="GO" id="GO:0046081">
    <property type="term" value="P:dUTP catabolic process"/>
    <property type="evidence" value="ECO:0000318"/>
    <property type="project" value="GO_Central"/>
</dbReference>
<dbReference type="GO" id="GO:0046047">
    <property type="term" value="P:TTP catabolic process"/>
    <property type="evidence" value="ECO:0000318"/>
    <property type="project" value="GO_Central"/>
</dbReference>
<dbReference type="GO" id="GO:0046052">
    <property type="term" value="P:UTP catabolic process"/>
    <property type="evidence" value="ECO:0000318"/>
    <property type="project" value="GO_Central"/>
</dbReference>
<dbReference type="CDD" id="cd11529">
    <property type="entry name" value="NTP-PPase_MazG_Cterm"/>
    <property type="match status" value="1"/>
</dbReference>
<dbReference type="CDD" id="cd11528">
    <property type="entry name" value="NTP-PPase_MazG_Nterm"/>
    <property type="match status" value="1"/>
</dbReference>
<dbReference type="FunFam" id="1.10.287.1080:FF:000001">
    <property type="entry name" value="Nucleoside triphosphate pyrophosphohydrolase"/>
    <property type="match status" value="1"/>
</dbReference>
<dbReference type="FunFam" id="1.10.287.1080:FF:000003">
    <property type="entry name" value="Nucleoside triphosphate pyrophosphohydrolase"/>
    <property type="match status" value="1"/>
</dbReference>
<dbReference type="Gene3D" id="1.10.287.1080">
    <property type="entry name" value="MazG-like"/>
    <property type="match status" value="2"/>
</dbReference>
<dbReference type="InterPro" id="IPR004518">
    <property type="entry name" value="MazG-like_dom"/>
</dbReference>
<dbReference type="InterPro" id="IPR048011">
    <property type="entry name" value="NTP-PPase_MazG-like_C"/>
</dbReference>
<dbReference type="InterPro" id="IPR048015">
    <property type="entry name" value="NTP-PPase_MazG-like_N"/>
</dbReference>
<dbReference type="InterPro" id="IPR011551">
    <property type="entry name" value="NTP_PyrPHydrolase_MazG"/>
</dbReference>
<dbReference type="NCBIfam" id="TIGR00444">
    <property type="entry name" value="mazG"/>
    <property type="match status" value="1"/>
</dbReference>
<dbReference type="NCBIfam" id="NF007113">
    <property type="entry name" value="PRK09562.1"/>
    <property type="match status" value="1"/>
</dbReference>
<dbReference type="PANTHER" id="PTHR30522">
    <property type="entry name" value="NUCLEOSIDE TRIPHOSPHATE PYROPHOSPHOHYDROLASE"/>
    <property type="match status" value="1"/>
</dbReference>
<dbReference type="PANTHER" id="PTHR30522:SF0">
    <property type="entry name" value="NUCLEOSIDE TRIPHOSPHATE PYROPHOSPHOHYDROLASE"/>
    <property type="match status" value="1"/>
</dbReference>
<dbReference type="Pfam" id="PF03819">
    <property type="entry name" value="MazG"/>
    <property type="match status" value="2"/>
</dbReference>
<dbReference type="SUPFAM" id="SSF101386">
    <property type="entry name" value="all-alpha NTP pyrophosphatases"/>
    <property type="match status" value="2"/>
</dbReference>
<accession>P0AEY3</accession>
<accession>P33646</accession>
<accession>Q2MA51</accession>
<protein>
    <recommendedName>
        <fullName>Nucleoside triphosphate pyrophosphohydrolase</fullName>
        <shortName>NTP-PPase</shortName>
        <ecNumber>3.6.1.8</ecNumber>
    </recommendedName>
</protein>
<proteinExistence type="evidence at protein level"/>
<organism>
    <name type="scientific">Escherichia coli (strain K12)</name>
    <dbReference type="NCBI Taxonomy" id="83333"/>
    <lineage>
        <taxon>Bacteria</taxon>
        <taxon>Pseudomonadati</taxon>
        <taxon>Pseudomonadota</taxon>
        <taxon>Gammaproteobacteria</taxon>
        <taxon>Enterobacterales</taxon>
        <taxon>Enterobacteriaceae</taxon>
        <taxon>Escherichia</taxon>
    </lineage>
</organism>
<gene>
    <name type="primary">mazG</name>
    <name type="ordered locus">b2781</name>
    <name type="ordered locus">JW2752</name>
</gene>
<reference key="1">
    <citation type="submission" date="1993-11" db="EMBL/GenBank/DDBJ databases">
        <authorList>
            <person name="Aizenman E."/>
            <person name="Glaser G."/>
        </authorList>
    </citation>
    <scope>NUCLEOTIDE SEQUENCE [GENOMIC DNA]</scope>
    <source>
        <strain>K12</strain>
    </source>
</reference>
<reference key="2">
    <citation type="journal article" date="1997" name="Science">
        <title>The complete genome sequence of Escherichia coli K-12.</title>
        <authorList>
            <person name="Blattner F.R."/>
            <person name="Plunkett G. III"/>
            <person name="Bloch C.A."/>
            <person name="Perna N.T."/>
            <person name="Burland V."/>
            <person name="Riley M."/>
            <person name="Collado-Vides J."/>
            <person name="Glasner J.D."/>
            <person name="Rode C.K."/>
            <person name="Mayhew G.F."/>
            <person name="Gregor J."/>
            <person name="Davis N.W."/>
            <person name="Kirkpatrick H.A."/>
            <person name="Goeden M.A."/>
            <person name="Rose D.J."/>
            <person name="Mau B."/>
            <person name="Shao Y."/>
        </authorList>
    </citation>
    <scope>NUCLEOTIDE SEQUENCE [LARGE SCALE GENOMIC DNA]</scope>
    <source>
        <strain>K12 / MG1655 / ATCC 47076</strain>
    </source>
</reference>
<reference key="3">
    <citation type="journal article" date="2006" name="Mol. Syst. Biol.">
        <title>Highly accurate genome sequences of Escherichia coli K-12 strains MG1655 and W3110.</title>
        <authorList>
            <person name="Hayashi K."/>
            <person name="Morooka N."/>
            <person name="Yamamoto Y."/>
            <person name="Fujita K."/>
            <person name="Isono K."/>
            <person name="Choi S."/>
            <person name="Ohtsubo E."/>
            <person name="Baba T."/>
            <person name="Wanner B.L."/>
            <person name="Mori H."/>
            <person name="Horiuchi T."/>
        </authorList>
    </citation>
    <scope>NUCLEOTIDE SEQUENCE [LARGE SCALE GENOMIC DNA]</scope>
    <source>
        <strain>K12 / W3110 / ATCC 27325 / DSM 5911</strain>
    </source>
</reference>
<reference key="4">
    <citation type="journal article" date="2002" name="J. Bacteriol.">
        <title>MazG, a nucleoside triphosphate pyrophosphohydrolase, interacts with Era, an essential GTPase in Escherichia coli.</title>
        <authorList>
            <person name="Zhang J."/>
            <person name="Inouye M."/>
        </authorList>
    </citation>
    <scope>CATALYTIC ACTIVITY</scope>
    <scope>SUBSTRATE SPECIFICITY</scope>
    <scope>SUBUNIT</scope>
    <scope>INTERACTION WITH ERA</scope>
</reference>
<reference key="5">
    <citation type="journal article" date="2006" name="Mol. Microbiol.">
        <title>MazG -- a regulator of programmed cell death in Escherichia coli.</title>
        <authorList>
            <person name="Gross M."/>
            <person name="Marianovsky I."/>
            <person name="Glaser G."/>
        </authorList>
    </citation>
    <scope>FUNCTION IN NUTRITIONAL STRESS RESPONSE</scope>
    <scope>ACTIVITY REGULATION</scope>
    <scope>OPERON STRUCTURE</scope>
    <source>
        <strain>K12 / MC4100 / ATCC 35695 / DSM 6574</strain>
        <strain>K12 / W3110 / ATCC 27325 / DSM 5911</strain>
    </source>
</reference>
<reference key="6">
    <citation type="journal article" date="2010" name="J. Biol. Chem.">
        <title>Mycobacterial MazG is a novel NTP pyrophosphohydrolase involved in oxidative stress response.</title>
        <authorList>
            <person name="Lu L.D."/>
            <person name="Sun Q."/>
            <person name="Fan X.Y."/>
            <person name="Zhong Y."/>
            <person name="Yao Y.F."/>
            <person name="Zhao G.P."/>
        </authorList>
    </citation>
    <scope>FUNCTION AS PYROPHOSPHOHYDROLASE</scope>
    <scope>BIOPHYSICOCHEMICAL PROPERTIES</scope>
</reference>
<reference key="7">
    <citation type="journal article" date="2008" name="J. Biol. Chem.">
        <title>Crystal structure of Escherichia coli MazG, the regulator of nutritional stress response.</title>
        <authorList>
            <person name="Lee S."/>
            <person name="Kim M.H."/>
            <person name="Kang B.S."/>
            <person name="Kim J.S."/>
            <person name="Kim G.H."/>
            <person name="Kim Y.G."/>
            <person name="Kim K.J."/>
        </authorList>
    </citation>
    <scope>X-RAY CRYSTALLOGRAPHY (2.1 ANGSTROMS) OF MUTANT ALA-119/ALA-257 IN COMPLEX WITH ATP</scope>
    <scope>FUNCTION IN NUTRITIONAL STRESS RESPONSE</scope>
    <scope>CATALYTIC ACTIVITY</scope>
    <scope>MUTAGENESIS OF ARG-95; LYS-119; LYS-168; GLU-171; GLU-172; GLU-175; LYS-189; GLU-192; GLU-193; ASP-196; LYS-222; ARG-226; TRP-253 AND LYS-257</scope>
    <scope>SUBUNIT</scope>
</reference>
<keyword id="KW-0002">3D-structure</keyword>
<keyword id="KW-0067">ATP-binding</keyword>
<keyword id="KW-0378">Hydrolase</keyword>
<keyword id="KW-0460">Magnesium</keyword>
<keyword id="KW-0479">Metal-binding</keyword>
<keyword id="KW-0547">Nucleotide-binding</keyword>
<keyword id="KW-1185">Reference proteome</keyword>
<evidence type="ECO:0000269" key="1">
    <source>
    </source>
</evidence>
<evidence type="ECO:0000269" key="2">
    <source>
    </source>
</evidence>
<evidence type="ECO:0000269" key="3">
    <source>
    </source>
</evidence>
<evidence type="ECO:0000269" key="4">
    <source>
    </source>
</evidence>
<evidence type="ECO:0000305" key="5"/>
<evidence type="ECO:0007829" key="6">
    <source>
        <dbReference type="PDB" id="3CRA"/>
    </source>
</evidence>
<evidence type="ECO:0007829" key="7">
    <source>
        <dbReference type="PDB" id="3CRC"/>
    </source>
</evidence>
<feature type="chain" id="PRO_0000096248" description="Nucleoside triphosphate pyrophosphohydrolase">
    <location>
        <begin position="1"/>
        <end position="263"/>
    </location>
</feature>
<feature type="binding site" evidence="3">
    <location>
        <begin position="168"/>
        <end position="172"/>
    </location>
    <ligand>
        <name>ATP</name>
        <dbReference type="ChEBI" id="CHEBI:30616"/>
        <label>1</label>
    </ligand>
</feature>
<feature type="binding site">
    <location>
        <position position="172"/>
    </location>
    <ligand>
        <name>Mg(2+)</name>
        <dbReference type="ChEBI" id="CHEBI:18420"/>
    </ligand>
</feature>
<feature type="binding site" evidence="3">
    <location>
        <position position="175"/>
    </location>
    <ligand>
        <name>ATP</name>
        <dbReference type="ChEBI" id="CHEBI:30616"/>
        <label>1</label>
    </ligand>
</feature>
<feature type="binding site">
    <location>
        <position position="175"/>
    </location>
    <ligand>
        <name>Mg(2+)</name>
        <dbReference type="ChEBI" id="CHEBI:18420"/>
    </ligand>
</feature>
<feature type="binding site" evidence="3">
    <location>
        <begin position="189"/>
        <end position="192"/>
    </location>
    <ligand>
        <name>ATP</name>
        <dbReference type="ChEBI" id="CHEBI:30616"/>
        <label>1</label>
    </ligand>
</feature>
<feature type="binding site">
    <location>
        <position position="193"/>
    </location>
    <ligand>
        <name>Mg(2+)</name>
        <dbReference type="ChEBI" id="CHEBI:18420"/>
    </ligand>
</feature>
<feature type="binding site" evidence="3">
    <location>
        <position position="196"/>
    </location>
    <ligand>
        <name>ATP</name>
        <dbReference type="ChEBI" id="CHEBI:30616"/>
        <label>1</label>
    </ligand>
</feature>
<feature type="binding site">
    <location>
        <position position="196"/>
    </location>
    <ligand>
        <name>Mg(2+)</name>
        <dbReference type="ChEBI" id="CHEBI:18420"/>
    </ligand>
</feature>
<feature type="binding site" evidence="3">
    <location>
        <begin position="222"/>
        <end position="226"/>
    </location>
    <ligand>
        <name>ATP</name>
        <dbReference type="ChEBI" id="CHEBI:30616"/>
        <label>2</label>
    </ligand>
</feature>
<feature type="binding site" evidence="3">
    <location>
        <position position="253"/>
    </location>
    <ligand>
        <name>ATP</name>
        <dbReference type="ChEBI" id="CHEBI:30616"/>
        <label>2</label>
    </ligand>
</feature>
<feature type="mutagenesis site" description="Does not affect nucleotide pyrophosphohydrolysis activity." evidence="3">
    <original>R</original>
    <variation>A</variation>
    <location>
        <position position="95"/>
    </location>
</feature>
<feature type="mutagenesis site" description="Does not affect the nucleotide pyrophosphohydrolysis activity." evidence="3">
    <original>K</original>
    <variation>A</variation>
    <location>
        <position position="119"/>
    </location>
</feature>
<feature type="mutagenesis site" description="Does not affect nucleotide pyrophosphohydrolysis activity." evidence="3">
    <original>K</original>
    <variation>A</variation>
    <location>
        <position position="168"/>
    </location>
</feature>
<feature type="mutagenesis site" description="Does not affect nucleotide pyrophosphohydrolysis activity." evidence="3">
    <original>E</original>
    <variation>A</variation>
    <location>
        <position position="171"/>
    </location>
</feature>
<feature type="mutagenesis site" description="Loss of pyrophosphohydrolysis activity against both ATP and dTTP." evidence="3">
    <original>E</original>
    <variation>A</variation>
    <location>
        <position position="172"/>
    </location>
</feature>
<feature type="mutagenesis site" description="Does not affect nucleotide pyrophosphohydrolysis activity." evidence="3">
    <original>E</original>
    <variation>A</variation>
    <location>
        <position position="175"/>
    </location>
</feature>
<feature type="mutagenesis site" description="Does not affect nucleotide pyrophosphohydrolysis activity." evidence="3">
    <original>K</original>
    <variation>A</variation>
    <location>
        <position position="189"/>
    </location>
</feature>
<feature type="mutagenesis site" description="Does not affect nucleotide pyrophosphohydrolysis activity." evidence="3">
    <original>E</original>
    <variation>A</variation>
    <location>
        <position position="192"/>
    </location>
</feature>
<feature type="mutagenesis site" description="Loss of pyrophosphohydrolysis activity against both ATP and dTTP." evidence="3">
    <original>E</original>
    <variation>A</variation>
    <location>
        <position position="193"/>
    </location>
</feature>
<feature type="mutagenesis site" description="Loss of pyrophosphohydrolysis activity against both ATP and dTTP." evidence="3">
    <original>D</original>
    <variation>A</variation>
    <location>
        <position position="196"/>
    </location>
</feature>
<feature type="mutagenesis site" description="Loss of pyrophosphohydrolysis activity against both ATP and dTTP." evidence="3">
    <original>K</original>
    <variation>A</variation>
    <location>
        <position position="222"/>
    </location>
</feature>
<feature type="mutagenesis site" description="Loss of pyrophosphohydrolysis activity against both ATP and dTTP." evidence="3">
    <original>R</original>
    <variation>A</variation>
    <location>
        <position position="226"/>
    </location>
</feature>
<feature type="mutagenesis site" description="Loss of pyrophosphohydrolysis activity against both ATP and dTTP." evidence="3">
    <original>W</original>
    <variation>A</variation>
    <location>
        <position position="253"/>
    </location>
</feature>
<feature type="mutagenesis site" description="Loss of pyrophosphohydrolysis activity against both ATP and dTTP." evidence="3">
    <original>K</original>
    <variation>A</variation>
    <location>
        <position position="257"/>
    </location>
</feature>
<feature type="sequence conflict" description="In Ref. 1; AAA03240." evidence="5" ref="1">
    <location>
        <position position="226"/>
    </location>
</feature>
<feature type="helix" evidence="6">
    <location>
        <begin position="3"/>
        <end position="15"/>
    </location>
</feature>
<feature type="turn" evidence="6">
    <location>
        <begin position="17"/>
        <end position="19"/>
    </location>
</feature>
<feature type="helix" evidence="6">
    <location>
        <begin position="24"/>
        <end position="26"/>
    </location>
</feature>
<feature type="helix" evidence="6">
    <location>
        <begin position="29"/>
        <end position="48"/>
    </location>
</feature>
<feature type="helix" evidence="6">
    <location>
        <begin position="52"/>
        <end position="74"/>
    </location>
</feature>
<feature type="turn" evidence="6">
    <location>
        <begin position="75"/>
        <end position="77"/>
    </location>
</feature>
<feature type="helix" evidence="6">
    <location>
        <begin position="81"/>
        <end position="93"/>
    </location>
</feature>
<feature type="helix" evidence="6">
    <location>
        <begin position="115"/>
        <end position="123"/>
    </location>
</feature>
<feature type="strand" evidence="7">
    <location>
        <begin position="132"/>
        <end position="134"/>
    </location>
</feature>
<feature type="strand" evidence="7">
    <location>
        <begin position="137"/>
        <end position="139"/>
    </location>
</feature>
<feature type="helix" evidence="6">
    <location>
        <begin position="141"/>
        <end position="153"/>
    </location>
</feature>
<feature type="turn" evidence="6">
    <location>
        <begin position="154"/>
        <end position="156"/>
    </location>
</feature>
<feature type="helix" evidence="6">
    <location>
        <begin position="162"/>
        <end position="181"/>
    </location>
</feature>
<feature type="strand" evidence="6">
    <location>
        <begin position="182"/>
        <end position="184"/>
    </location>
</feature>
<feature type="helix" evidence="6">
    <location>
        <begin position="187"/>
        <end position="207"/>
    </location>
</feature>
<feature type="helix" evidence="6">
    <location>
        <begin position="212"/>
        <end position="236"/>
    </location>
</feature>
<feature type="helix" evidence="6">
    <location>
        <begin position="249"/>
        <end position="258"/>
    </location>
</feature>